<evidence type="ECO:0000255" key="1">
    <source>
        <dbReference type="HAMAP-Rule" id="MF_00107"/>
    </source>
</evidence>
<comment type="function">
    <text evidence="1">Involved in the biosynthesis of isopentenyl diphosphate (IPP) and dimethylallyl diphosphate (DMAPP), two major building blocks of isoprenoid compounds. Catalyzes the conversion of 4-diphosphocytidyl-2-C-methyl-D-erythritol 2-phosphate (CDP-ME2P) to 2-C-methyl-D-erythritol 2,4-cyclodiphosphate (ME-CPP) with a corresponding release of cytidine 5-monophosphate (CMP).</text>
</comment>
<comment type="catalytic activity">
    <reaction evidence="1">
        <text>4-CDP-2-C-methyl-D-erythritol 2-phosphate = 2-C-methyl-D-erythritol 2,4-cyclic diphosphate + CMP</text>
        <dbReference type="Rhea" id="RHEA:23864"/>
        <dbReference type="ChEBI" id="CHEBI:57919"/>
        <dbReference type="ChEBI" id="CHEBI:58483"/>
        <dbReference type="ChEBI" id="CHEBI:60377"/>
        <dbReference type="EC" id="4.6.1.12"/>
    </reaction>
</comment>
<comment type="cofactor">
    <cofactor evidence="1">
        <name>a divalent metal cation</name>
        <dbReference type="ChEBI" id="CHEBI:60240"/>
    </cofactor>
    <text evidence="1">Binds 1 divalent metal cation per subunit.</text>
</comment>
<comment type="pathway">
    <text evidence="1">Isoprenoid biosynthesis; isopentenyl diphosphate biosynthesis via DXP pathway; isopentenyl diphosphate from 1-deoxy-D-xylulose 5-phosphate: step 4/6.</text>
</comment>
<comment type="subunit">
    <text evidence="1">Homotrimer.</text>
</comment>
<comment type="similarity">
    <text evidence="1">Belongs to the IspF family.</text>
</comment>
<name>ISPF_SYNAS</name>
<reference key="1">
    <citation type="journal article" date="2007" name="Proc. Natl. Acad. Sci. U.S.A.">
        <title>The genome of Syntrophus aciditrophicus: life at the thermodynamic limit of microbial growth.</title>
        <authorList>
            <person name="McInerney M.J."/>
            <person name="Rohlin L."/>
            <person name="Mouttaki H."/>
            <person name="Kim U."/>
            <person name="Krupp R.S."/>
            <person name="Rios-Hernandez L."/>
            <person name="Sieber J."/>
            <person name="Struchtemeyer C.G."/>
            <person name="Bhattacharyya A."/>
            <person name="Campbell J.W."/>
            <person name="Gunsalus R.P."/>
        </authorList>
    </citation>
    <scope>NUCLEOTIDE SEQUENCE [LARGE SCALE GENOMIC DNA]</scope>
    <source>
        <strain>SB</strain>
    </source>
</reference>
<accession>Q2LUT1</accession>
<organism>
    <name type="scientific">Syntrophus aciditrophicus (strain SB)</name>
    <dbReference type="NCBI Taxonomy" id="56780"/>
    <lineage>
        <taxon>Bacteria</taxon>
        <taxon>Pseudomonadati</taxon>
        <taxon>Thermodesulfobacteriota</taxon>
        <taxon>Syntrophia</taxon>
        <taxon>Syntrophales</taxon>
        <taxon>Syntrophaceae</taxon>
        <taxon>Syntrophus</taxon>
    </lineage>
</organism>
<sequence length="159" mass="17269">MRVGCGYDSHRWAAKRKLILGGVEIPHEFGLTGHSDADALTHAICDALLGAISEGDIGFQFPDSDPAYSGISSLKLLSKILEMVDKKGFAIDYIDSTVIMERPKLMPYIPDMKSKIAGVLKMPSDRINIKAKTNEGMGFVGRQEGVAVFAVALVKENQD</sequence>
<proteinExistence type="inferred from homology"/>
<keyword id="KW-0414">Isoprene biosynthesis</keyword>
<keyword id="KW-0456">Lyase</keyword>
<keyword id="KW-0479">Metal-binding</keyword>
<keyword id="KW-1185">Reference proteome</keyword>
<gene>
    <name evidence="1" type="primary">ispF</name>
    <name type="ordered locus">SYNAS_19620</name>
    <name type="ORF">SYN_01400</name>
</gene>
<protein>
    <recommendedName>
        <fullName evidence="1">2-C-methyl-D-erythritol 2,4-cyclodiphosphate synthase</fullName>
        <shortName evidence="1">MECDP-synthase</shortName>
        <shortName evidence="1">MECPP-synthase</shortName>
        <shortName evidence="1">MECPS</shortName>
        <ecNumber evidence="1">4.6.1.12</ecNumber>
    </recommendedName>
</protein>
<feature type="chain" id="PRO_0000237760" description="2-C-methyl-D-erythritol 2,4-cyclodiphosphate synthase">
    <location>
        <begin position="1"/>
        <end position="159"/>
    </location>
</feature>
<feature type="binding site" evidence="1">
    <location>
        <begin position="8"/>
        <end position="10"/>
    </location>
    <ligand>
        <name>4-CDP-2-C-methyl-D-erythritol 2-phosphate</name>
        <dbReference type="ChEBI" id="CHEBI:57919"/>
    </ligand>
</feature>
<feature type="binding site" evidence="1">
    <location>
        <position position="8"/>
    </location>
    <ligand>
        <name>a divalent metal cation</name>
        <dbReference type="ChEBI" id="CHEBI:60240"/>
    </ligand>
</feature>
<feature type="binding site" evidence="1">
    <location>
        <position position="10"/>
    </location>
    <ligand>
        <name>a divalent metal cation</name>
        <dbReference type="ChEBI" id="CHEBI:60240"/>
    </ligand>
</feature>
<feature type="binding site" evidence="1">
    <location>
        <begin position="34"/>
        <end position="35"/>
    </location>
    <ligand>
        <name>4-CDP-2-C-methyl-D-erythritol 2-phosphate</name>
        <dbReference type="ChEBI" id="CHEBI:57919"/>
    </ligand>
</feature>
<feature type="binding site" evidence="1">
    <location>
        <position position="42"/>
    </location>
    <ligand>
        <name>a divalent metal cation</name>
        <dbReference type="ChEBI" id="CHEBI:60240"/>
    </ligand>
</feature>
<feature type="binding site" evidence="1">
    <location>
        <begin position="56"/>
        <end position="58"/>
    </location>
    <ligand>
        <name>4-CDP-2-C-methyl-D-erythritol 2-phosphate</name>
        <dbReference type="ChEBI" id="CHEBI:57919"/>
    </ligand>
</feature>
<feature type="binding site" evidence="1">
    <location>
        <begin position="61"/>
        <end position="65"/>
    </location>
    <ligand>
        <name>4-CDP-2-C-methyl-D-erythritol 2-phosphate</name>
        <dbReference type="ChEBI" id="CHEBI:57919"/>
    </ligand>
</feature>
<feature type="binding site" evidence="1">
    <location>
        <position position="139"/>
    </location>
    <ligand>
        <name>4-CDP-2-C-methyl-D-erythritol 2-phosphate</name>
        <dbReference type="ChEBI" id="CHEBI:57919"/>
    </ligand>
</feature>
<feature type="binding site" evidence="1">
    <location>
        <position position="142"/>
    </location>
    <ligand>
        <name>4-CDP-2-C-methyl-D-erythritol 2-phosphate</name>
        <dbReference type="ChEBI" id="CHEBI:57919"/>
    </ligand>
</feature>
<feature type="site" description="Transition state stabilizer" evidence="1">
    <location>
        <position position="34"/>
    </location>
</feature>
<feature type="site" description="Transition state stabilizer" evidence="1">
    <location>
        <position position="133"/>
    </location>
</feature>
<dbReference type="EC" id="4.6.1.12" evidence="1"/>
<dbReference type="EMBL" id="CP000252">
    <property type="protein sequence ID" value="ABC77842.1"/>
    <property type="molecule type" value="Genomic_DNA"/>
</dbReference>
<dbReference type="RefSeq" id="WP_011417862.1">
    <property type="nucleotide sequence ID" value="NC_007759.1"/>
</dbReference>
<dbReference type="SMR" id="Q2LUT1"/>
<dbReference type="FunCoup" id="Q2LUT1">
    <property type="interactions" value="341"/>
</dbReference>
<dbReference type="STRING" id="56780.SYN_01400"/>
<dbReference type="KEGG" id="sat:SYN_01400"/>
<dbReference type="eggNOG" id="COG0245">
    <property type="taxonomic scope" value="Bacteria"/>
</dbReference>
<dbReference type="HOGENOM" id="CLU_084630_2_0_7"/>
<dbReference type="InParanoid" id="Q2LUT1"/>
<dbReference type="OrthoDB" id="9804336at2"/>
<dbReference type="UniPathway" id="UPA00056">
    <property type="reaction ID" value="UER00095"/>
</dbReference>
<dbReference type="Proteomes" id="UP000001933">
    <property type="component" value="Chromosome"/>
</dbReference>
<dbReference type="GO" id="GO:0008685">
    <property type="term" value="F:2-C-methyl-D-erythritol 2,4-cyclodiphosphate synthase activity"/>
    <property type="evidence" value="ECO:0007669"/>
    <property type="project" value="UniProtKB-UniRule"/>
</dbReference>
<dbReference type="GO" id="GO:0046872">
    <property type="term" value="F:metal ion binding"/>
    <property type="evidence" value="ECO:0007669"/>
    <property type="project" value="UniProtKB-KW"/>
</dbReference>
<dbReference type="GO" id="GO:0019288">
    <property type="term" value="P:isopentenyl diphosphate biosynthetic process, methylerythritol 4-phosphate pathway"/>
    <property type="evidence" value="ECO:0007669"/>
    <property type="project" value="UniProtKB-UniRule"/>
</dbReference>
<dbReference type="GO" id="GO:0016114">
    <property type="term" value="P:terpenoid biosynthetic process"/>
    <property type="evidence" value="ECO:0007669"/>
    <property type="project" value="InterPro"/>
</dbReference>
<dbReference type="CDD" id="cd00554">
    <property type="entry name" value="MECDP_synthase"/>
    <property type="match status" value="1"/>
</dbReference>
<dbReference type="Gene3D" id="3.30.1330.50">
    <property type="entry name" value="2-C-methyl-D-erythritol 2,4-cyclodiphosphate synthase"/>
    <property type="match status" value="1"/>
</dbReference>
<dbReference type="HAMAP" id="MF_00107">
    <property type="entry name" value="IspF"/>
    <property type="match status" value="1"/>
</dbReference>
<dbReference type="InterPro" id="IPR003526">
    <property type="entry name" value="MECDP_synthase"/>
</dbReference>
<dbReference type="InterPro" id="IPR020555">
    <property type="entry name" value="MECDP_synthase_CS"/>
</dbReference>
<dbReference type="InterPro" id="IPR036571">
    <property type="entry name" value="MECDP_synthase_sf"/>
</dbReference>
<dbReference type="NCBIfam" id="TIGR00151">
    <property type="entry name" value="ispF"/>
    <property type="match status" value="1"/>
</dbReference>
<dbReference type="PANTHER" id="PTHR43181">
    <property type="entry name" value="2-C-METHYL-D-ERYTHRITOL 2,4-CYCLODIPHOSPHATE SYNTHASE, CHLOROPLASTIC"/>
    <property type="match status" value="1"/>
</dbReference>
<dbReference type="PANTHER" id="PTHR43181:SF1">
    <property type="entry name" value="2-C-METHYL-D-ERYTHRITOL 2,4-CYCLODIPHOSPHATE SYNTHASE, CHLOROPLASTIC"/>
    <property type="match status" value="1"/>
</dbReference>
<dbReference type="Pfam" id="PF02542">
    <property type="entry name" value="YgbB"/>
    <property type="match status" value="1"/>
</dbReference>
<dbReference type="SUPFAM" id="SSF69765">
    <property type="entry name" value="IpsF-like"/>
    <property type="match status" value="1"/>
</dbReference>
<dbReference type="PROSITE" id="PS01350">
    <property type="entry name" value="ISPF"/>
    <property type="match status" value="1"/>
</dbReference>